<reference key="1">
    <citation type="submission" date="2005-08" db="EMBL/GenBank/DDBJ databases">
        <title>Complete sequence of chromosome 1 of Synechococcus elongatus PCC 7942.</title>
        <authorList>
            <consortium name="US DOE Joint Genome Institute"/>
            <person name="Copeland A."/>
            <person name="Lucas S."/>
            <person name="Lapidus A."/>
            <person name="Barry K."/>
            <person name="Detter J.C."/>
            <person name="Glavina T."/>
            <person name="Hammon N."/>
            <person name="Israni S."/>
            <person name="Pitluck S."/>
            <person name="Schmutz J."/>
            <person name="Larimer F."/>
            <person name="Land M."/>
            <person name="Kyrpides N."/>
            <person name="Lykidis A."/>
            <person name="Golden S."/>
            <person name="Richardson P."/>
        </authorList>
    </citation>
    <scope>NUCLEOTIDE SEQUENCE [LARGE SCALE GENOMIC DNA]</scope>
    <source>
        <strain>ATCC 33912 / PCC 7942 / FACHB-805</strain>
    </source>
</reference>
<dbReference type="EC" id="2.7.7.60" evidence="1"/>
<dbReference type="EMBL" id="CP000100">
    <property type="protein sequence ID" value="ABB56713.1"/>
    <property type="molecule type" value="Genomic_DNA"/>
</dbReference>
<dbReference type="RefSeq" id="WP_011377681.1">
    <property type="nucleotide sequence ID" value="NZ_JACJTX010000005.1"/>
</dbReference>
<dbReference type="SMR" id="Q31QF6"/>
<dbReference type="STRING" id="1140.Synpcc7942_0681"/>
<dbReference type="PaxDb" id="1140-Synpcc7942_0681"/>
<dbReference type="GeneID" id="72429514"/>
<dbReference type="KEGG" id="syf:Synpcc7942_0681"/>
<dbReference type="eggNOG" id="COG1211">
    <property type="taxonomic scope" value="Bacteria"/>
</dbReference>
<dbReference type="HOGENOM" id="CLU_061281_1_0_3"/>
<dbReference type="OrthoDB" id="9806837at2"/>
<dbReference type="BioCyc" id="SYNEL:SYNPCC7942_0681-MONOMER"/>
<dbReference type="UniPathway" id="UPA00056">
    <property type="reaction ID" value="UER00093"/>
</dbReference>
<dbReference type="Proteomes" id="UP000889800">
    <property type="component" value="Chromosome"/>
</dbReference>
<dbReference type="GO" id="GO:0050518">
    <property type="term" value="F:2-C-methyl-D-erythritol 4-phosphate cytidylyltransferase activity"/>
    <property type="evidence" value="ECO:0007669"/>
    <property type="project" value="UniProtKB-UniRule"/>
</dbReference>
<dbReference type="GO" id="GO:0019288">
    <property type="term" value="P:isopentenyl diphosphate biosynthetic process, methylerythritol 4-phosphate pathway"/>
    <property type="evidence" value="ECO:0007669"/>
    <property type="project" value="UniProtKB-UniRule"/>
</dbReference>
<dbReference type="CDD" id="cd02516">
    <property type="entry name" value="CDP-ME_synthetase"/>
    <property type="match status" value="1"/>
</dbReference>
<dbReference type="FunFam" id="3.90.550.10:FF:000003">
    <property type="entry name" value="2-C-methyl-D-erythritol 4-phosphate cytidylyltransferase"/>
    <property type="match status" value="1"/>
</dbReference>
<dbReference type="Gene3D" id="3.90.550.10">
    <property type="entry name" value="Spore Coat Polysaccharide Biosynthesis Protein SpsA, Chain A"/>
    <property type="match status" value="1"/>
</dbReference>
<dbReference type="HAMAP" id="MF_00108">
    <property type="entry name" value="IspD"/>
    <property type="match status" value="1"/>
</dbReference>
<dbReference type="InterPro" id="IPR001228">
    <property type="entry name" value="IspD"/>
</dbReference>
<dbReference type="InterPro" id="IPR034683">
    <property type="entry name" value="IspD/TarI"/>
</dbReference>
<dbReference type="InterPro" id="IPR050088">
    <property type="entry name" value="IspD/TarI_cytidylyltransf_bact"/>
</dbReference>
<dbReference type="InterPro" id="IPR018294">
    <property type="entry name" value="ISPD_synthase_CS"/>
</dbReference>
<dbReference type="InterPro" id="IPR029044">
    <property type="entry name" value="Nucleotide-diphossugar_trans"/>
</dbReference>
<dbReference type="NCBIfam" id="TIGR00453">
    <property type="entry name" value="ispD"/>
    <property type="match status" value="1"/>
</dbReference>
<dbReference type="PANTHER" id="PTHR32125">
    <property type="entry name" value="2-C-METHYL-D-ERYTHRITOL 4-PHOSPHATE CYTIDYLYLTRANSFERASE, CHLOROPLASTIC"/>
    <property type="match status" value="1"/>
</dbReference>
<dbReference type="PANTHER" id="PTHR32125:SF4">
    <property type="entry name" value="2-C-METHYL-D-ERYTHRITOL 4-PHOSPHATE CYTIDYLYLTRANSFERASE, CHLOROPLASTIC"/>
    <property type="match status" value="1"/>
</dbReference>
<dbReference type="Pfam" id="PF01128">
    <property type="entry name" value="IspD"/>
    <property type="match status" value="1"/>
</dbReference>
<dbReference type="SUPFAM" id="SSF53448">
    <property type="entry name" value="Nucleotide-diphospho-sugar transferases"/>
    <property type="match status" value="1"/>
</dbReference>
<dbReference type="PROSITE" id="PS01295">
    <property type="entry name" value="ISPD"/>
    <property type="match status" value="1"/>
</dbReference>
<gene>
    <name evidence="1" type="primary">ispD</name>
    <name type="ordered locus">Synpcc7942_0681</name>
</gene>
<comment type="function">
    <text evidence="1">Catalyzes the formation of 4-diphosphocytidyl-2-C-methyl-D-erythritol from CTP and 2-C-methyl-D-erythritol 4-phosphate (MEP).</text>
</comment>
<comment type="catalytic activity">
    <reaction evidence="1">
        <text>2-C-methyl-D-erythritol 4-phosphate + CTP + H(+) = 4-CDP-2-C-methyl-D-erythritol + diphosphate</text>
        <dbReference type="Rhea" id="RHEA:13429"/>
        <dbReference type="ChEBI" id="CHEBI:15378"/>
        <dbReference type="ChEBI" id="CHEBI:33019"/>
        <dbReference type="ChEBI" id="CHEBI:37563"/>
        <dbReference type="ChEBI" id="CHEBI:57823"/>
        <dbReference type="ChEBI" id="CHEBI:58262"/>
        <dbReference type="EC" id="2.7.7.60"/>
    </reaction>
</comment>
<comment type="pathway">
    <text evidence="1">Isoprenoid biosynthesis; isopentenyl diphosphate biosynthesis via DXP pathway; isopentenyl diphosphate from 1-deoxy-D-xylulose 5-phosphate: step 2/6.</text>
</comment>
<comment type="similarity">
    <text evidence="1">Belongs to the IspD/TarI cytidylyltransferase family. IspD subfamily.</text>
</comment>
<evidence type="ECO:0000255" key="1">
    <source>
        <dbReference type="HAMAP-Rule" id="MF_00108"/>
    </source>
</evidence>
<name>ISPD_SYNE7</name>
<organism>
    <name type="scientific">Synechococcus elongatus (strain ATCC 33912 / PCC 7942 / FACHB-805)</name>
    <name type="common">Anacystis nidulans R2</name>
    <dbReference type="NCBI Taxonomy" id="1140"/>
    <lineage>
        <taxon>Bacteria</taxon>
        <taxon>Bacillati</taxon>
        <taxon>Cyanobacteriota</taxon>
        <taxon>Cyanophyceae</taxon>
        <taxon>Synechococcales</taxon>
        <taxon>Synechococcaceae</taxon>
        <taxon>Synechococcus</taxon>
    </lineage>
</organism>
<keyword id="KW-0414">Isoprene biosynthesis</keyword>
<keyword id="KW-0548">Nucleotidyltransferase</keyword>
<keyword id="KW-1185">Reference proteome</keyword>
<keyword id="KW-0808">Transferase</keyword>
<sequence>MHLLIPAAGSGRRFGADRNKLLLPLLGQPVLAWTLQAADQAQSITWIGIIGQPGDRADIEALVDQLQLATPVSWIQGGRERQESVFNGLRSLPSGAQQVLIHDGARCLATPTLFDRCSAALQTCPAFVAAVPVKDTIKQVAADGTIAATPDRSTLWAAQTPQGFTVESLLRCHRQGLEQQLAVTDDAALLEAFGLPVQIVEGEETNLKVTTPADLAIAELILKQRQFTAAIA</sequence>
<feature type="chain" id="PRO_0000237831" description="2-C-methyl-D-erythritol 4-phosphate cytidylyltransferase">
    <location>
        <begin position="1"/>
        <end position="232"/>
    </location>
</feature>
<feature type="site" description="Transition state stabilizer" evidence="1">
    <location>
        <position position="13"/>
    </location>
</feature>
<feature type="site" description="Transition state stabilizer" evidence="1">
    <location>
        <position position="20"/>
    </location>
</feature>
<feature type="site" description="Positions MEP for the nucleophilic attack" evidence="1">
    <location>
        <position position="152"/>
    </location>
</feature>
<feature type="site" description="Positions MEP for the nucleophilic attack" evidence="1">
    <location>
        <position position="208"/>
    </location>
</feature>
<accession>Q31QF6</accession>
<protein>
    <recommendedName>
        <fullName evidence="1">2-C-methyl-D-erythritol 4-phosphate cytidylyltransferase</fullName>
        <ecNumber evidence="1">2.7.7.60</ecNumber>
    </recommendedName>
    <alternativeName>
        <fullName evidence="1">4-diphosphocytidyl-2C-methyl-D-erythritol synthase</fullName>
    </alternativeName>
    <alternativeName>
        <fullName evidence="1">MEP cytidylyltransferase</fullName>
        <shortName evidence="1">MCT</shortName>
    </alternativeName>
</protein>
<proteinExistence type="inferred from homology"/>